<feature type="chain" id="PRO_0000307788" description="Probable N-acetyltransferase 14">
    <location>
        <begin position="1"/>
        <end position="206"/>
    </location>
</feature>
<feature type="transmembrane region" description="Helical" evidence="3">
    <location>
        <begin position="57"/>
        <end position="77"/>
    </location>
</feature>
<feature type="domain" description="N-acetyltransferase" evidence="4">
    <location>
        <begin position="6"/>
        <end position="206"/>
    </location>
</feature>
<name>NAT14_MOUSE</name>
<evidence type="ECO:0000250" key="1"/>
<evidence type="ECO:0000250" key="2">
    <source>
        <dbReference type="UniProtKB" id="Q8WUY8"/>
    </source>
</evidence>
<evidence type="ECO:0000255" key="3"/>
<evidence type="ECO:0000255" key="4">
    <source>
        <dbReference type="PROSITE-ProRule" id="PRU00532"/>
    </source>
</evidence>
<evidence type="ECO:0000305" key="5"/>
<comment type="function">
    <text evidence="1">Probable acetyltransferase that binds the 5'-GGACTACAG-3' sequence of coproporphyrinogen oxidase promoter. Able to activate transcription of a reporter construct in vitro (By similarity).</text>
</comment>
<comment type="function">
    <text evidence="5">Probable acetyltransferase.</text>
</comment>
<comment type="function">
    <text evidence="2">May act as a transcription factor regulating the expression of coproporphyrinogen oxidase by binding to a promoter regulatory element.</text>
</comment>
<comment type="subcellular location">
    <subcellularLocation>
        <location evidence="1">Membrane</location>
        <topology evidence="1">Single-pass membrane protein</topology>
    </subcellularLocation>
</comment>
<comment type="similarity">
    <text evidence="5">Belongs to the camello family.</text>
</comment>
<protein>
    <recommendedName>
        <fullName>Probable N-acetyltransferase 14</fullName>
        <ecNumber evidence="5">2.3.1.-</ecNumber>
    </recommendedName>
</protein>
<accession>Q8BVG8</accession>
<reference key="1">
    <citation type="journal article" date="2005" name="Science">
        <title>The transcriptional landscape of the mammalian genome.</title>
        <authorList>
            <person name="Carninci P."/>
            <person name="Kasukawa T."/>
            <person name="Katayama S."/>
            <person name="Gough J."/>
            <person name="Frith M.C."/>
            <person name="Maeda N."/>
            <person name="Oyama R."/>
            <person name="Ravasi T."/>
            <person name="Lenhard B."/>
            <person name="Wells C."/>
            <person name="Kodzius R."/>
            <person name="Shimokawa K."/>
            <person name="Bajic V.B."/>
            <person name="Brenner S.E."/>
            <person name="Batalov S."/>
            <person name="Forrest A.R."/>
            <person name="Zavolan M."/>
            <person name="Davis M.J."/>
            <person name="Wilming L.G."/>
            <person name="Aidinis V."/>
            <person name="Allen J.E."/>
            <person name="Ambesi-Impiombato A."/>
            <person name="Apweiler R."/>
            <person name="Aturaliya R.N."/>
            <person name="Bailey T.L."/>
            <person name="Bansal M."/>
            <person name="Baxter L."/>
            <person name="Beisel K.W."/>
            <person name="Bersano T."/>
            <person name="Bono H."/>
            <person name="Chalk A.M."/>
            <person name="Chiu K.P."/>
            <person name="Choudhary V."/>
            <person name="Christoffels A."/>
            <person name="Clutterbuck D.R."/>
            <person name="Crowe M.L."/>
            <person name="Dalla E."/>
            <person name="Dalrymple B.P."/>
            <person name="de Bono B."/>
            <person name="Della Gatta G."/>
            <person name="di Bernardo D."/>
            <person name="Down T."/>
            <person name="Engstrom P."/>
            <person name="Fagiolini M."/>
            <person name="Faulkner G."/>
            <person name="Fletcher C.F."/>
            <person name="Fukushima T."/>
            <person name="Furuno M."/>
            <person name="Futaki S."/>
            <person name="Gariboldi M."/>
            <person name="Georgii-Hemming P."/>
            <person name="Gingeras T.R."/>
            <person name="Gojobori T."/>
            <person name="Green R.E."/>
            <person name="Gustincich S."/>
            <person name="Harbers M."/>
            <person name="Hayashi Y."/>
            <person name="Hensch T.K."/>
            <person name="Hirokawa N."/>
            <person name="Hill D."/>
            <person name="Huminiecki L."/>
            <person name="Iacono M."/>
            <person name="Ikeo K."/>
            <person name="Iwama A."/>
            <person name="Ishikawa T."/>
            <person name="Jakt M."/>
            <person name="Kanapin A."/>
            <person name="Katoh M."/>
            <person name="Kawasawa Y."/>
            <person name="Kelso J."/>
            <person name="Kitamura H."/>
            <person name="Kitano H."/>
            <person name="Kollias G."/>
            <person name="Krishnan S.P."/>
            <person name="Kruger A."/>
            <person name="Kummerfeld S.K."/>
            <person name="Kurochkin I.V."/>
            <person name="Lareau L.F."/>
            <person name="Lazarevic D."/>
            <person name="Lipovich L."/>
            <person name="Liu J."/>
            <person name="Liuni S."/>
            <person name="McWilliam S."/>
            <person name="Madan Babu M."/>
            <person name="Madera M."/>
            <person name="Marchionni L."/>
            <person name="Matsuda H."/>
            <person name="Matsuzawa S."/>
            <person name="Miki H."/>
            <person name="Mignone F."/>
            <person name="Miyake S."/>
            <person name="Morris K."/>
            <person name="Mottagui-Tabar S."/>
            <person name="Mulder N."/>
            <person name="Nakano N."/>
            <person name="Nakauchi H."/>
            <person name="Ng P."/>
            <person name="Nilsson R."/>
            <person name="Nishiguchi S."/>
            <person name="Nishikawa S."/>
            <person name="Nori F."/>
            <person name="Ohara O."/>
            <person name="Okazaki Y."/>
            <person name="Orlando V."/>
            <person name="Pang K.C."/>
            <person name="Pavan W.J."/>
            <person name="Pavesi G."/>
            <person name="Pesole G."/>
            <person name="Petrovsky N."/>
            <person name="Piazza S."/>
            <person name="Reed J."/>
            <person name="Reid J.F."/>
            <person name="Ring B.Z."/>
            <person name="Ringwald M."/>
            <person name="Rost B."/>
            <person name="Ruan Y."/>
            <person name="Salzberg S.L."/>
            <person name="Sandelin A."/>
            <person name="Schneider C."/>
            <person name="Schoenbach C."/>
            <person name="Sekiguchi K."/>
            <person name="Semple C.A."/>
            <person name="Seno S."/>
            <person name="Sessa L."/>
            <person name="Sheng Y."/>
            <person name="Shibata Y."/>
            <person name="Shimada H."/>
            <person name="Shimada K."/>
            <person name="Silva D."/>
            <person name="Sinclair B."/>
            <person name="Sperling S."/>
            <person name="Stupka E."/>
            <person name="Sugiura K."/>
            <person name="Sultana R."/>
            <person name="Takenaka Y."/>
            <person name="Taki K."/>
            <person name="Tammoja K."/>
            <person name="Tan S.L."/>
            <person name="Tang S."/>
            <person name="Taylor M.S."/>
            <person name="Tegner J."/>
            <person name="Teichmann S.A."/>
            <person name="Ueda H.R."/>
            <person name="van Nimwegen E."/>
            <person name="Verardo R."/>
            <person name="Wei C.L."/>
            <person name="Yagi K."/>
            <person name="Yamanishi H."/>
            <person name="Zabarovsky E."/>
            <person name="Zhu S."/>
            <person name="Zimmer A."/>
            <person name="Hide W."/>
            <person name="Bult C."/>
            <person name="Grimmond S.M."/>
            <person name="Teasdale R.D."/>
            <person name="Liu E.T."/>
            <person name="Brusic V."/>
            <person name="Quackenbush J."/>
            <person name="Wahlestedt C."/>
            <person name="Mattick J.S."/>
            <person name="Hume D.A."/>
            <person name="Kai C."/>
            <person name="Sasaki D."/>
            <person name="Tomaru Y."/>
            <person name="Fukuda S."/>
            <person name="Kanamori-Katayama M."/>
            <person name="Suzuki M."/>
            <person name="Aoki J."/>
            <person name="Arakawa T."/>
            <person name="Iida J."/>
            <person name="Imamura K."/>
            <person name="Itoh M."/>
            <person name="Kato T."/>
            <person name="Kawaji H."/>
            <person name="Kawagashira N."/>
            <person name="Kawashima T."/>
            <person name="Kojima M."/>
            <person name="Kondo S."/>
            <person name="Konno H."/>
            <person name="Nakano K."/>
            <person name="Ninomiya N."/>
            <person name="Nishio T."/>
            <person name="Okada M."/>
            <person name="Plessy C."/>
            <person name="Shibata K."/>
            <person name="Shiraki T."/>
            <person name="Suzuki S."/>
            <person name="Tagami M."/>
            <person name="Waki K."/>
            <person name="Watahiki A."/>
            <person name="Okamura-Oho Y."/>
            <person name="Suzuki H."/>
            <person name="Kawai J."/>
            <person name="Hayashizaki Y."/>
        </authorList>
    </citation>
    <scope>NUCLEOTIDE SEQUENCE [LARGE SCALE MRNA]</scope>
    <source>
        <strain>C57BL/6J</strain>
        <tissue>Olfactory bulb</tissue>
        <tissue>Visual cortex</tissue>
    </source>
</reference>
<reference key="2">
    <citation type="journal article" date="2004" name="Genome Res.">
        <title>The status, quality, and expansion of the NIH full-length cDNA project: the Mammalian Gene Collection (MGC).</title>
        <authorList>
            <consortium name="The MGC Project Team"/>
        </authorList>
    </citation>
    <scope>NUCLEOTIDE SEQUENCE [LARGE SCALE MRNA]</scope>
    <source>
        <tissue>Eye</tissue>
    </source>
</reference>
<reference key="3">
    <citation type="journal article" date="2010" name="Cell">
        <title>A tissue-specific atlas of mouse protein phosphorylation and expression.</title>
        <authorList>
            <person name="Huttlin E.L."/>
            <person name="Jedrychowski M.P."/>
            <person name="Elias J.E."/>
            <person name="Goswami T."/>
            <person name="Rad R."/>
            <person name="Beausoleil S.A."/>
            <person name="Villen J."/>
            <person name="Haas W."/>
            <person name="Sowa M.E."/>
            <person name="Gygi S.P."/>
        </authorList>
    </citation>
    <scope>IDENTIFICATION BY MASS SPECTROMETRY [LARGE SCALE ANALYSIS]</scope>
    <source>
        <tissue>Brain</tissue>
    </source>
</reference>
<keyword id="KW-0010">Activator</keyword>
<keyword id="KW-0012">Acyltransferase</keyword>
<keyword id="KW-0238">DNA-binding</keyword>
<keyword id="KW-0472">Membrane</keyword>
<keyword id="KW-1185">Reference proteome</keyword>
<keyword id="KW-0804">Transcription</keyword>
<keyword id="KW-0805">Transcription regulation</keyword>
<keyword id="KW-0808">Transferase</keyword>
<keyword id="KW-0812">Transmembrane</keyword>
<keyword id="KW-1133">Transmembrane helix</keyword>
<sequence>MAPNHLSVREMREDEKPLVLEMLKAGVKDTENRVALHALTRPPALLLLAAASSGLRFILASFALALLLPVFLAVAAVKLGLRARWGSLPPPGGLGGPWVAVRGSGDVCGVLALAPGANVGDGARVTRLSVSRWHRRRGVGRRLLAFAEARARAWAGSMGEPRARLVVPVAVAAWGVAGLLEACGYQAEGGWGCMGYMLVREFSKDL</sequence>
<proteinExistence type="evidence at protein level"/>
<dbReference type="EC" id="2.3.1.-" evidence="5"/>
<dbReference type="EMBL" id="AK078272">
    <property type="protein sequence ID" value="BAC37199.1"/>
    <property type="molecule type" value="mRNA"/>
</dbReference>
<dbReference type="EMBL" id="AK158627">
    <property type="protein sequence ID" value="BAE34587.1"/>
    <property type="molecule type" value="mRNA"/>
</dbReference>
<dbReference type="EMBL" id="BC047219">
    <property type="protein sequence ID" value="AAH47219.1"/>
    <property type="molecule type" value="mRNA"/>
</dbReference>
<dbReference type="CCDS" id="CCDS20749.1"/>
<dbReference type="RefSeq" id="NP_001345810.1">
    <property type="nucleotide sequence ID" value="NM_001358881.1"/>
</dbReference>
<dbReference type="RefSeq" id="NP_001345811.1">
    <property type="nucleotide sequence ID" value="NM_001358882.1"/>
</dbReference>
<dbReference type="RefSeq" id="NP_001345812.1">
    <property type="nucleotide sequence ID" value="NM_001358883.1"/>
</dbReference>
<dbReference type="RefSeq" id="NP_001345813.1">
    <property type="nucleotide sequence ID" value="NM_001358884.1"/>
</dbReference>
<dbReference type="RefSeq" id="NP_958743.1">
    <property type="nucleotide sequence ID" value="NM_201355.3"/>
</dbReference>
<dbReference type="RefSeq" id="XP_006540078.1">
    <property type="nucleotide sequence ID" value="XM_006540015.3"/>
</dbReference>
<dbReference type="RefSeq" id="XP_006540080.1">
    <property type="nucleotide sequence ID" value="XM_006540017.1"/>
</dbReference>
<dbReference type="RefSeq" id="XP_006540081.1">
    <property type="nucleotide sequence ID" value="XM_006540018.1"/>
</dbReference>
<dbReference type="RefSeq" id="XP_006540082.1">
    <property type="nucleotide sequence ID" value="XM_006540019.3"/>
</dbReference>
<dbReference type="RefSeq" id="XP_006540083.1">
    <property type="nucleotide sequence ID" value="XM_006540020.1"/>
</dbReference>
<dbReference type="RefSeq" id="XP_006540084.1">
    <property type="nucleotide sequence ID" value="XM_006540021.1"/>
</dbReference>
<dbReference type="FunCoup" id="Q8BVG8">
    <property type="interactions" value="43"/>
</dbReference>
<dbReference type="STRING" id="10090.ENSMUSP00000045354"/>
<dbReference type="iPTMnet" id="Q8BVG8"/>
<dbReference type="PhosphoSitePlus" id="Q8BVG8"/>
<dbReference type="SwissPalm" id="Q8BVG8"/>
<dbReference type="PaxDb" id="10090-ENSMUSP00000045354"/>
<dbReference type="PeptideAtlas" id="Q8BVG8"/>
<dbReference type="ProteomicsDB" id="287606"/>
<dbReference type="Antibodypedia" id="33111">
    <property type="antibodies" value="89 antibodies from 17 providers"/>
</dbReference>
<dbReference type="Ensembl" id="ENSMUST00000047309.6">
    <property type="protein sequence ID" value="ENSMUSP00000045354.6"/>
    <property type="gene ID" value="ENSMUSG00000035285.7"/>
</dbReference>
<dbReference type="Ensembl" id="ENSMUST00000207687.2">
    <property type="protein sequence ID" value="ENSMUSP00000147229.2"/>
    <property type="gene ID" value="ENSMUSG00000035285.7"/>
</dbReference>
<dbReference type="GeneID" id="269854"/>
<dbReference type="KEGG" id="mmu:269854"/>
<dbReference type="UCSC" id="uc009eyy.2">
    <property type="organism name" value="mouse"/>
</dbReference>
<dbReference type="AGR" id="MGI:3039561"/>
<dbReference type="CTD" id="57106"/>
<dbReference type="MGI" id="MGI:3039561">
    <property type="gene designation" value="Nat14"/>
</dbReference>
<dbReference type="VEuPathDB" id="HostDB:ENSMUSG00000035285"/>
<dbReference type="eggNOG" id="ENOG502RYNT">
    <property type="taxonomic scope" value="Eukaryota"/>
</dbReference>
<dbReference type="GeneTree" id="ENSGT00950000182932"/>
<dbReference type="HOGENOM" id="CLU_127402_0_0_1"/>
<dbReference type="InParanoid" id="Q8BVG8"/>
<dbReference type="OMA" id="PWVAVWG"/>
<dbReference type="OrthoDB" id="41532at2759"/>
<dbReference type="PhylomeDB" id="Q8BVG8"/>
<dbReference type="TreeFam" id="TF336981"/>
<dbReference type="BioGRID-ORCS" id="269854">
    <property type="hits" value="0 hits in 82 CRISPR screens"/>
</dbReference>
<dbReference type="CD-CODE" id="CE726F99">
    <property type="entry name" value="Postsynaptic density"/>
</dbReference>
<dbReference type="ChiTaRS" id="Nat14">
    <property type="organism name" value="mouse"/>
</dbReference>
<dbReference type="PRO" id="PR:Q8BVG8"/>
<dbReference type="Proteomes" id="UP000000589">
    <property type="component" value="Chromosome 7"/>
</dbReference>
<dbReference type="RNAct" id="Q8BVG8">
    <property type="molecule type" value="protein"/>
</dbReference>
<dbReference type="Bgee" id="ENSMUSG00000035285">
    <property type="expression patterns" value="Expressed in dentate gyrus of hippocampal formation granule cell and 205 other cell types or tissues"/>
</dbReference>
<dbReference type="ExpressionAtlas" id="Q8BVG8">
    <property type="expression patterns" value="baseline and differential"/>
</dbReference>
<dbReference type="GO" id="GO:0016020">
    <property type="term" value="C:membrane"/>
    <property type="evidence" value="ECO:0007669"/>
    <property type="project" value="UniProtKB-SubCell"/>
</dbReference>
<dbReference type="GO" id="GO:0003677">
    <property type="term" value="F:DNA binding"/>
    <property type="evidence" value="ECO:0007669"/>
    <property type="project" value="UniProtKB-KW"/>
</dbReference>
<dbReference type="GO" id="GO:0008080">
    <property type="term" value="F:N-acetyltransferase activity"/>
    <property type="evidence" value="ECO:0007669"/>
    <property type="project" value="InterPro"/>
</dbReference>
<dbReference type="Gene3D" id="3.40.630.30">
    <property type="match status" value="1"/>
</dbReference>
<dbReference type="InterPro" id="IPR016181">
    <property type="entry name" value="Acyl_CoA_acyltransferase"/>
</dbReference>
<dbReference type="InterPro" id="IPR000182">
    <property type="entry name" value="GNAT_dom"/>
</dbReference>
<dbReference type="InterPro" id="IPR050769">
    <property type="entry name" value="NAT_camello-type"/>
</dbReference>
<dbReference type="PANTHER" id="PTHR13947">
    <property type="entry name" value="GNAT FAMILY N-ACETYLTRANSFERASE"/>
    <property type="match status" value="1"/>
</dbReference>
<dbReference type="PANTHER" id="PTHR13947:SF51">
    <property type="entry name" value="N-ACETYLTRANSFERASE 14-RELATED"/>
    <property type="match status" value="1"/>
</dbReference>
<dbReference type="Pfam" id="PF00583">
    <property type="entry name" value="Acetyltransf_1"/>
    <property type="match status" value="1"/>
</dbReference>
<dbReference type="SUPFAM" id="SSF55729">
    <property type="entry name" value="Acyl-CoA N-acyltransferases (Nat)"/>
    <property type="match status" value="1"/>
</dbReference>
<dbReference type="PROSITE" id="PS51186">
    <property type="entry name" value="GNAT"/>
    <property type="match status" value="1"/>
</dbReference>
<organism>
    <name type="scientific">Mus musculus</name>
    <name type="common">Mouse</name>
    <dbReference type="NCBI Taxonomy" id="10090"/>
    <lineage>
        <taxon>Eukaryota</taxon>
        <taxon>Metazoa</taxon>
        <taxon>Chordata</taxon>
        <taxon>Craniata</taxon>
        <taxon>Vertebrata</taxon>
        <taxon>Euteleostomi</taxon>
        <taxon>Mammalia</taxon>
        <taxon>Eutheria</taxon>
        <taxon>Euarchontoglires</taxon>
        <taxon>Glires</taxon>
        <taxon>Rodentia</taxon>
        <taxon>Myomorpha</taxon>
        <taxon>Muroidea</taxon>
        <taxon>Muridae</taxon>
        <taxon>Murinae</taxon>
        <taxon>Mus</taxon>
        <taxon>Mus</taxon>
    </lineage>
</organism>
<gene>
    <name type="primary">Nat14</name>
</gene>